<feature type="chain" id="PRO_0000102079" description="ATP-dependent DNA helicase UvrD2">
    <location>
        <begin position="1"/>
        <end position="700"/>
    </location>
</feature>
<feature type="domain" description="UvrD-like helicase ATP-binding" evidence="3">
    <location>
        <begin position="10"/>
        <end position="301"/>
    </location>
</feature>
<feature type="domain" description="UvrD-like helicase C-terminal" evidence="4">
    <location>
        <begin position="302"/>
        <end position="553"/>
    </location>
</feature>
<feature type="domain" description="HRDC" evidence="2">
    <location>
        <begin position="626"/>
        <end position="700"/>
    </location>
</feature>
<feature type="region of interest" description="Disordered" evidence="5">
    <location>
        <begin position="565"/>
        <end position="595"/>
    </location>
</feature>
<feature type="region of interest" description="Not required for growth">
    <location>
        <begin position="601"/>
        <end position="700"/>
    </location>
</feature>
<feature type="binding site" evidence="3">
    <location>
        <begin position="34"/>
        <end position="39"/>
    </location>
    <ligand>
        <name>ATP</name>
        <dbReference type="ChEBI" id="CHEBI:30616"/>
    </ligand>
</feature>
<feature type="binding site" evidence="1">
    <location>
        <position position="299"/>
    </location>
    <ligand>
        <name>ATP</name>
        <dbReference type="ChEBI" id="CHEBI:30616"/>
    </ligand>
</feature>
<feature type="mutagenesis site" description="Loss of growth, no ATPase activity. No DNA unwinding. Does not translocate along DNA." evidence="7">
    <original>Q</original>
    <variation>R</variation>
    <location>
        <position position="266"/>
    </location>
</feature>
<feature type="mutagenesis site" description="Not essential for growth, no helicase activity. Wild-type ATPase activity, translocates along DNA. No DNA unwinding." evidence="7">
    <original>E</original>
    <variation>A</variation>
    <location>
        <position position="508"/>
    </location>
</feature>
<comment type="function">
    <text evidence="6 7">DNA-dependent ATPase, stimulated equally by ss- and dsDNA. Has both ATPase and helicase activities, and translocates along ssDNA displacing bound streptavidin. Its essentiality for growth does not depend on its helicase activity.</text>
</comment>
<comment type="catalytic activity">
    <reaction>
        <text>Couples ATP hydrolysis with the unwinding of duplex DNA by translocating in the 3'-5' direction.</text>
        <dbReference type="EC" id="5.6.2.4"/>
    </reaction>
</comment>
<comment type="catalytic activity">
    <reaction>
        <text>ATP + H2O = ADP + phosphate + H(+)</text>
        <dbReference type="Rhea" id="RHEA:13065"/>
        <dbReference type="ChEBI" id="CHEBI:15377"/>
        <dbReference type="ChEBI" id="CHEBI:15378"/>
        <dbReference type="ChEBI" id="CHEBI:30616"/>
        <dbReference type="ChEBI" id="CHEBI:43474"/>
        <dbReference type="ChEBI" id="CHEBI:456216"/>
        <dbReference type="EC" id="5.6.2.4"/>
    </reaction>
</comment>
<comment type="cofactor">
    <cofactor evidence="7">
        <name>Mg(2+)</name>
        <dbReference type="ChEBI" id="CHEBI:18420"/>
    </cofactor>
</comment>
<comment type="biophysicochemical properties">
    <kinetics>
        <KM evidence="7">68 uM for ATP</KM>
        <KM evidence="7">0.049 uM for ssDNA</KM>
        <text>kcat is 0.035 sec(-1) with ATP.</text>
    </kinetics>
</comment>
<comment type="disruption phenotype">
    <text evidence="7">Essential for growth; the 100 C-terminal residues are not required for growth.</text>
</comment>
<comment type="similarity">
    <text evidence="8">Belongs to the helicase family. UvrD subfamily.</text>
</comment>
<keyword id="KW-0067">ATP-binding</keyword>
<keyword id="KW-0227">DNA damage</keyword>
<keyword id="KW-0234">DNA repair</keyword>
<keyword id="KW-0238">DNA-binding</keyword>
<keyword id="KW-0347">Helicase</keyword>
<keyword id="KW-0378">Hydrolase</keyword>
<keyword id="KW-0413">Isomerase</keyword>
<keyword id="KW-0547">Nucleotide-binding</keyword>
<keyword id="KW-1185">Reference proteome</keyword>
<sequence>MSIASDPLIAGLDDQQREAVLAPRGPVCVLAGAGTGKTRTITHRIASLVASGHVAAGQVLAVTFTQRAAGEMRSRLRALDAAARTGSGVGAVQALTFHAAAYRQLRYFWSRVIADTGWQLLDSKFAVVARAASRTRLHASTDDVRDLAGEIEWAKASLIGPEEYVTAVAAARRDPPLDAAQIAAVYSEYEALKARGDGVTLLDFDDLLLHTAAAIENDAAVAEEFQDRYRCFVVDEYQDVTPLQQRVLSAWLGDRDDLTVVGDANQTIYSFTGASPRFLLDFSRRFPDAAVVRLERDYRSTPQVVSLANRVIAAARGRVAGSKLRLSGQREPGPVPSFHEHSDEPAEAATVAASIARLIASGTPPSEVAILYRVNAQSEVYEEALTQAGIAYQVRGGEGFFNRQEIKQALLALQRVSERDTDAALSDVVRAVLAPLGLTAQPPVGTRARERWEALTALAELVDDELAQRPALQLPGLLAELRRRAEARHPPVVQGVTLASLHAAKGLEWDAVFLVGLADGTLPISHALAHGPNSEPVEEERRLLYVGITRARVHLALSWALSRSPGGRQSRKPSRFLNGIAPQTRADPVPGTSRRNRGAAARCRICNNELNTSAAVMLRRCETCAADVDEELLLQLKSWRLSTAKEQNVPAYVVFTDNTLIAIAELLPTDDAALIAIPGIGARKLEQYGSDVLQLVRGRT</sequence>
<dbReference type="EC" id="5.6.2.4"/>
<dbReference type="EMBL" id="AL123456">
    <property type="protein sequence ID" value="CCP46012.1"/>
    <property type="molecule type" value="Genomic_DNA"/>
</dbReference>
<dbReference type="PIR" id="D70951">
    <property type="entry name" value="D70951"/>
</dbReference>
<dbReference type="RefSeq" id="NP_217714.1">
    <property type="nucleotide sequence ID" value="NC_000962.3"/>
</dbReference>
<dbReference type="RefSeq" id="WP_003416822.1">
    <property type="nucleotide sequence ID" value="NZ_NVQJ01000003.1"/>
</dbReference>
<dbReference type="SMR" id="P9WMP9"/>
<dbReference type="STRING" id="83332.Rv3198c"/>
<dbReference type="PaxDb" id="83332-Rv3198c"/>
<dbReference type="DNASU" id="888902"/>
<dbReference type="GeneID" id="45427188"/>
<dbReference type="GeneID" id="888902"/>
<dbReference type="KEGG" id="mtu:Rv3198c"/>
<dbReference type="KEGG" id="mtv:RVBD_3198c"/>
<dbReference type="PATRIC" id="fig|83332.111.peg.3569"/>
<dbReference type="TubercuList" id="Rv3198c"/>
<dbReference type="eggNOG" id="COG0210">
    <property type="taxonomic scope" value="Bacteria"/>
</dbReference>
<dbReference type="InParanoid" id="P9WMP9"/>
<dbReference type="OrthoDB" id="9806690at2"/>
<dbReference type="PhylomeDB" id="P9WMP9"/>
<dbReference type="BRENDA" id="3.6.4.12">
    <property type="organism ID" value="3445"/>
</dbReference>
<dbReference type="Proteomes" id="UP000001584">
    <property type="component" value="Chromosome"/>
</dbReference>
<dbReference type="GO" id="GO:0005829">
    <property type="term" value="C:cytosol"/>
    <property type="evidence" value="ECO:0000318"/>
    <property type="project" value="GO_Central"/>
</dbReference>
<dbReference type="GO" id="GO:0033202">
    <property type="term" value="C:DNA helicase complex"/>
    <property type="evidence" value="ECO:0000318"/>
    <property type="project" value="GO_Central"/>
</dbReference>
<dbReference type="GO" id="GO:0043138">
    <property type="term" value="F:3'-5' DNA helicase activity"/>
    <property type="evidence" value="ECO:0000318"/>
    <property type="project" value="GO_Central"/>
</dbReference>
<dbReference type="GO" id="GO:0005524">
    <property type="term" value="F:ATP binding"/>
    <property type="evidence" value="ECO:0007669"/>
    <property type="project" value="UniProtKB-KW"/>
</dbReference>
<dbReference type="GO" id="GO:0016887">
    <property type="term" value="F:ATP hydrolysis activity"/>
    <property type="evidence" value="ECO:0007669"/>
    <property type="project" value="RHEA"/>
</dbReference>
<dbReference type="GO" id="GO:0008094">
    <property type="term" value="F:ATP-dependent activity, acting on DNA"/>
    <property type="evidence" value="ECO:0000314"/>
    <property type="project" value="MTBBASE"/>
</dbReference>
<dbReference type="GO" id="GO:0003677">
    <property type="term" value="F:DNA binding"/>
    <property type="evidence" value="ECO:0007669"/>
    <property type="project" value="UniProtKB-KW"/>
</dbReference>
<dbReference type="GO" id="GO:0003678">
    <property type="term" value="F:DNA helicase activity"/>
    <property type="evidence" value="ECO:0000314"/>
    <property type="project" value="MTBBASE"/>
</dbReference>
<dbReference type="GO" id="GO:0000287">
    <property type="term" value="F:magnesium ion binding"/>
    <property type="evidence" value="ECO:0000314"/>
    <property type="project" value="MTBBASE"/>
</dbReference>
<dbReference type="GO" id="GO:0000725">
    <property type="term" value="P:recombinational repair"/>
    <property type="evidence" value="ECO:0000318"/>
    <property type="project" value="GO_Central"/>
</dbReference>
<dbReference type="CDD" id="cd17932">
    <property type="entry name" value="DEXQc_UvrD"/>
    <property type="match status" value="1"/>
</dbReference>
<dbReference type="CDD" id="cd18807">
    <property type="entry name" value="SF1_C_UvrD"/>
    <property type="match status" value="1"/>
</dbReference>
<dbReference type="FunFam" id="1.10.150.80:FF:000002">
    <property type="entry name" value="ATP-dependent DNA helicase RecQ"/>
    <property type="match status" value="1"/>
</dbReference>
<dbReference type="FunFam" id="3.40.50.300:FF:001201">
    <property type="entry name" value="ATP-dependent DNA helicase UvrD2"/>
    <property type="match status" value="1"/>
</dbReference>
<dbReference type="FunFam" id="3.40.50.300:FF:001181">
    <property type="entry name" value="DNA helicase"/>
    <property type="match status" value="1"/>
</dbReference>
<dbReference type="Gene3D" id="1.10.10.160">
    <property type="match status" value="1"/>
</dbReference>
<dbReference type="Gene3D" id="1.10.150.80">
    <property type="entry name" value="HRDC domain"/>
    <property type="match status" value="1"/>
</dbReference>
<dbReference type="Gene3D" id="3.40.50.300">
    <property type="entry name" value="P-loop containing nucleotide triphosphate hydrolases"/>
    <property type="match status" value="3"/>
</dbReference>
<dbReference type="InterPro" id="IPR013986">
    <property type="entry name" value="DExx_box_DNA_helicase_dom_sf"/>
</dbReference>
<dbReference type="InterPro" id="IPR014017">
    <property type="entry name" value="DNA_helicase_UvrD-like_C"/>
</dbReference>
<dbReference type="InterPro" id="IPR000212">
    <property type="entry name" value="DNA_helicase_UvrD/REP"/>
</dbReference>
<dbReference type="InterPro" id="IPR010997">
    <property type="entry name" value="HRDC-like_sf"/>
</dbReference>
<dbReference type="InterPro" id="IPR002121">
    <property type="entry name" value="HRDC_dom"/>
</dbReference>
<dbReference type="InterPro" id="IPR044876">
    <property type="entry name" value="HRDC_dom_sf"/>
</dbReference>
<dbReference type="InterPro" id="IPR027417">
    <property type="entry name" value="P-loop_NTPase"/>
</dbReference>
<dbReference type="InterPro" id="IPR014016">
    <property type="entry name" value="UvrD-like_ATP-bd"/>
</dbReference>
<dbReference type="PANTHER" id="PTHR11070:SF69">
    <property type="entry name" value="ATP-DEPENDENT DNA HELICASE UVRD2"/>
    <property type="match status" value="1"/>
</dbReference>
<dbReference type="PANTHER" id="PTHR11070">
    <property type="entry name" value="UVRD / RECB / PCRA DNA HELICASE FAMILY MEMBER"/>
    <property type="match status" value="1"/>
</dbReference>
<dbReference type="Pfam" id="PF00570">
    <property type="entry name" value="HRDC"/>
    <property type="match status" value="1"/>
</dbReference>
<dbReference type="Pfam" id="PF00580">
    <property type="entry name" value="UvrD-helicase"/>
    <property type="match status" value="1"/>
</dbReference>
<dbReference type="Pfam" id="PF13361">
    <property type="entry name" value="UvrD_C"/>
    <property type="match status" value="2"/>
</dbReference>
<dbReference type="SMART" id="SM00341">
    <property type="entry name" value="HRDC"/>
    <property type="match status" value="1"/>
</dbReference>
<dbReference type="SUPFAM" id="SSF47819">
    <property type="entry name" value="HRDC-like"/>
    <property type="match status" value="1"/>
</dbReference>
<dbReference type="SUPFAM" id="SSF52540">
    <property type="entry name" value="P-loop containing nucleoside triphosphate hydrolases"/>
    <property type="match status" value="1"/>
</dbReference>
<dbReference type="PROSITE" id="PS50967">
    <property type="entry name" value="HRDC"/>
    <property type="match status" value="1"/>
</dbReference>
<dbReference type="PROSITE" id="PS51198">
    <property type="entry name" value="UVRD_HELICASE_ATP_BIND"/>
    <property type="match status" value="1"/>
</dbReference>
<dbReference type="PROSITE" id="PS51217">
    <property type="entry name" value="UVRD_HELICASE_CTER"/>
    <property type="match status" value="1"/>
</dbReference>
<accession>P9WMP9</accession>
<accession>L0TBT8</accession>
<accession>O53344</accession>
<accession>P64320</accession>
<protein>
    <recommendedName>
        <fullName>ATP-dependent DNA helicase UvrD2</fullName>
        <ecNumber>5.6.2.4</ecNumber>
    </recommendedName>
    <alternativeName>
        <fullName evidence="8">DNA 3'-5' helicase UvrD2</fullName>
    </alternativeName>
</protein>
<gene>
    <name type="primary">uvrD2</name>
    <name type="ordered locus">Rv3198c</name>
    <name type="ORF">MTV014.42c</name>
</gene>
<organism>
    <name type="scientific">Mycobacterium tuberculosis (strain ATCC 25618 / H37Rv)</name>
    <dbReference type="NCBI Taxonomy" id="83332"/>
    <lineage>
        <taxon>Bacteria</taxon>
        <taxon>Bacillati</taxon>
        <taxon>Actinomycetota</taxon>
        <taxon>Actinomycetes</taxon>
        <taxon>Mycobacteriales</taxon>
        <taxon>Mycobacteriaceae</taxon>
        <taxon>Mycobacterium</taxon>
        <taxon>Mycobacterium tuberculosis complex</taxon>
    </lineage>
</organism>
<name>UVRD2_MYCTU</name>
<reference key="1">
    <citation type="journal article" date="1998" name="Nature">
        <title>Deciphering the biology of Mycobacterium tuberculosis from the complete genome sequence.</title>
        <authorList>
            <person name="Cole S.T."/>
            <person name="Brosch R."/>
            <person name="Parkhill J."/>
            <person name="Garnier T."/>
            <person name="Churcher C.M."/>
            <person name="Harris D.E."/>
            <person name="Gordon S.V."/>
            <person name="Eiglmeier K."/>
            <person name="Gas S."/>
            <person name="Barry C.E. III"/>
            <person name="Tekaia F."/>
            <person name="Badcock K."/>
            <person name="Basham D."/>
            <person name="Brown D."/>
            <person name="Chillingworth T."/>
            <person name="Connor R."/>
            <person name="Davies R.M."/>
            <person name="Devlin K."/>
            <person name="Feltwell T."/>
            <person name="Gentles S."/>
            <person name="Hamlin N."/>
            <person name="Holroyd S."/>
            <person name="Hornsby T."/>
            <person name="Jagels K."/>
            <person name="Krogh A."/>
            <person name="McLean J."/>
            <person name="Moule S."/>
            <person name="Murphy L.D."/>
            <person name="Oliver S."/>
            <person name="Osborne J."/>
            <person name="Quail M.A."/>
            <person name="Rajandream M.A."/>
            <person name="Rogers J."/>
            <person name="Rutter S."/>
            <person name="Seeger K."/>
            <person name="Skelton S."/>
            <person name="Squares S."/>
            <person name="Squares R."/>
            <person name="Sulston J.E."/>
            <person name="Taylor K."/>
            <person name="Whitehead S."/>
            <person name="Barrell B.G."/>
        </authorList>
    </citation>
    <scope>NUCLEOTIDE SEQUENCE [LARGE SCALE GENOMIC DNA]</scope>
    <source>
        <strain>ATCC 25618 / H37Rv</strain>
    </source>
</reference>
<reference key="2">
    <citation type="journal article" date="2010" name="Protein Expr. Purif.">
        <title>Expression, purification and characterization of UvrD2 helicase from Mycobacterium tuberculosis.</title>
        <authorList>
            <person name="Kazarian K."/>
            <person name="Cassani C."/>
            <person name="Rizzi M."/>
        </authorList>
    </citation>
    <scope>FUNCTION AS A DNA-DEPENDENT ATPASE</scope>
</reference>
<reference key="3">
    <citation type="journal article" date="2011" name="J. Bacteriol.">
        <title>UvrD2 is essential in Mycobacterium tuberculosis, but its helicase activity is not required.</title>
        <authorList>
            <person name="Williams A."/>
            <person name="Guthlein C."/>
            <person name="Beresford N."/>
            <person name="Bottger E.C."/>
            <person name="Springer B."/>
            <person name="Davis E.O."/>
        </authorList>
    </citation>
    <scope>FUNCTION AS A HELICASE</scope>
    <scope>COFACTOR</scope>
    <scope>BIOPHYSICOCHEMICAL PROPERTIES</scope>
    <scope>DISRUPTION PHENOTYPE</scope>
    <scope>MUTAGENESIS OF GLN-266 AND GLU-508</scope>
    <source>
        <strain>ATCC 25618 / H37Rv</strain>
    </source>
</reference>
<reference key="4">
    <citation type="journal article" date="2011" name="Mol. Cell. Proteomics">
        <title>Proteogenomic analysis of Mycobacterium tuberculosis by high resolution mass spectrometry.</title>
        <authorList>
            <person name="Kelkar D.S."/>
            <person name="Kumar D."/>
            <person name="Kumar P."/>
            <person name="Balakrishnan L."/>
            <person name="Muthusamy B."/>
            <person name="Yadav A.K."/>
            <person name="Shrivastava P."/>
            <person name="Marimuthu A."/>
            <person name="Anand S."/>
            <person name="Sundaram H."/>
            <person name="Kingsbury R."/>
            <person name="Harsha H.C."/>
            <person name="Nair B."/>
            <person name="Prasad T.S."/>
            <person name="Chauhan D.S."/>
            <person name="Katoch K."/>
            <person name="Katoch V.M."/>
            <person name="Kumar P."/>
            <person name="Chaerkady R."/>
            <person name="Ramachandran S."/>
            <person name="Dash D."/>
            <person name="Pandey A."/>
        </authorList>
    </citation>
    <scope>IDENTIFICATION BY MASS SPECTROMETRY [LARGE SCALE ANALYSIS]</scope>
    <source>
        <strain>ATCC 25618 / H37Rv</strain>
    </source>
</reference>
<proteinExistence type="evidence at protein level"/>
<evidence type="ECO:0000250" key="1"/>
<evidence type="ECO:0000255" key="2">
    <source>
        <dbReference type="PROSITE-ProRule" id="PRU00328"/>
    </source>
</evidence>
<evidence type="ECO:0000255" key="3">
    <source>
        <dbReference type="PROSITE-ProRule" id="PRU00560"/>
    </source>
</evidence>
<evidence type="ECO:0000255" key="4">
    <source>
        <dbReference type="PROSITE-ProRule" id="PRU00617"/>
    </source>
</evidence>
<evidence type="ECO:0000256" key="5">
    <source>
        <dbReference type="SAM" id="MobiDB-lite"/>
    </source>
</evidence>
<evidence type="ECO:0000269" key="6">
    <source>
    </source>
</evidence>
<evidence type="ECO:0000269" key="7">
    <source>
    </source>
</evidence>
<evidence type="ECO:0000305" key="8"/>